<proteinExistence type="inferred from homology"/>
<feature type="chain" id="PRO_0000286324" description="Spermidine/putrescine import ATP-binding protein PotA">
    <location>
        <begin position="1"/>
        <end position="372"/>
    </location>
</feature>
<feature type="domain" description="ABC transporter" evidence="1">
    <location>
        <begin position="13"/>
        <end position="243"/>
    </location>
</feature>
<feature type="binding site" evidence="1">
    <location>
        <begin position="45"/>
        <end position="52"/>
    </location>
    <ligand>
        <name>ATP</name>
        <dbReference type="ChEBI" id="CHEBI:30616"/>
    </ligand>
</feature>
<sequence length="372" mass="41908">MNVTQQSEKEAVIKLTGISKSFDGKEVISNFDLDVNHGEFLTILGPSGCGKTTVLRMIAGFETADAGTILLDSTDVTSVPAEQRHVNTVFQSYALFPHMTVFENVAFGLRMQKVAESEIEPRVTEALQMVRLAQMANRKPHQLSGGQQQRIAIARAVVNKPKVLLLDESLSALDYKLRKQMQIELKQLQRQLGITFIFVTHDQEEALSMSDRIIVMRDGVIEQDGTPREIYEEPKNLFVARFIGEINVFAATVQERLDEKRIKAEIEDTSAIVYCDLDVAPGDKVKVLLRPEDLRLEEIKESDNKGITGYVRERTYKGMTLDSVLELDSGMRVMISEFFNEDDPDVDHSLGQKVAITWVESWEVVLADEQEV</sequence>
<reference key="1">
    <citation type="journal article" date="2005" name="Proc. Natl. Acad. Sci. U.S.A.">
        <title>Complete genome sequence of Vibrio fischeri: a symbiotic bacterium with pathogenic congeners.</title>
        <authorList>
            <person name="Ruby E.G."/>
            <person name="Urbanowski M."/>
            <person name="Campbell J."/>
            <person name="Dunn A."/>
            <person name="Faini M."/>
            <person name="Gunsalus R."/>
            <person name="Lostroh P."/>
            <person name="Lupp C."/>
            <person name="McCann J."/>
            <person name="Millikan D."/>
            <person name="Schaefer A."/>
            <person name="Stabb E."/>
            <person name="Stevens A."/>
            <person name="Visick K."/>
            <person name="Whistler C."/>
            <person name="Greenberg E.P."/>
        </authorList>
    </citation>
    <scope>NUCLEOTIDE SEQUENCE [LARGE SCALE GENOMIC DNA]</scope>
    <source>
        <strain>ATCC 700601 / ES114</strain>
    </source>
</reference>
<evidence type="ECO:0000255" key="1">
    <source>
        <dbReference type="HAMAP-Rule" id="MF_01726"/>
    </source>
</evidence>
<accession>Q5E586</accession>
<comment type="function">
    <text evidence="1">Part of the ABC transporter complex PotABCD involved in spermidine/putrescine import. Responsible for energy coupling to the transport system.</text>
</comment>
<comment type="catalytic activity">
    <reaction evidence="1">
        <text>ATP + H2O + polyamine-[polyamine-binding protein]Side 1 = ADP + phosphate + polyamineSide 2 + [polyamine-binding protein]Side 1.</text>
        <dbReference type="EC" id="7.6.2.11"/>
    </reaction>
</comment>
<comment type="subunit">
    <text evidence="1">The complex is composed of two ATP-binding proteins (PotA), two transmembrane proteins (PotB and PotC) and a solute-binding protein (PotD).</text>
</comment>
<comment type="subcellular location">
    <subcellularLocation>
        <location evidence="1">Cell inner membrane</location>
        <topology evidence="1">Peripheral membrane protein</topology>
    </subcellularLocation>
</comment>
<comment type="similarity">
    <text evidence="1">Belongs to the ABC transporter superfamily. Spermidine/putrescine importer (TC 3.A.1.11.1) family.</text>
</comment>
<gene>
    <name evidence="1" type="primary">potA</name>
    <name type="ordered locus">VF_1315</name>
</gene>
<dbReference type="EC" id="7.6.2.11" evidence="1"/>
<dbReference type="EMBL" id="CP000020">
    <property type="protein sequence ID" value="AAW85810.1"/>
    <property type="molecule type" value="Genomic_DNA"/>
</dbReference>
<dbReference type="RefSeq" id="WP_005419246.1">
    <property type="nucleotide sequence ID" value="NC_006840.2"/>
</dbReference>
<dbReference type="RefSeq" id="YP_204698.1">
    <property type="nucleotide sequence ID" value="NC_006840.2"/>
</dbReference>
<dbReference type="SMR" id="Q5E586"/>
<dbReference type="STRING" id="312309.VF_1315"/>
<dbReference type="EnsemblBacteria" id="AAW85810">
    <property type="protein sequence ID" value="AAW85810"/>
    <property type="gene ID" value="VF_1315"/>
</dbReference>
<dbReference type="GeneID" id="54163985"/>
<dbReference type="KEGG" id="vfi:VF_1315"/>
<dbReference type="PATRIC" id="fig|312309.11.peg.1323"/>
<dbReference type="eggNOG" id="COG3842">
    <property type="taxonomic scope" value="Bacteria"/>
</dbReference>
<dbReference type="HOGENOM" id="CLU_000604_1_1_6"/>
<dbReference type="OrthoDB" id="9802264at2"/>
<dbReference type="Proteomes" id="UP000000537">
    <property type="component" value="Chromosome I"/>
</dbReference>
<dbReference type="GO" id="GO:0043190">
    <property type="term" value="C:ATP-binding cassette (ABC) transporter complex"/>
    <property type="evidence" value="ECO:0007669"/>
    <property type="project" value="InterPro"/>
</dbReference>
<dbReference type="GO" id="GO:0015594">
    <property type="term" value="F:ABC-type putrescine transporter activity"/>
    <property type="evidence" value="ECO:0007669"/>
    <property type="project" value="InterPro"/>
</dbReference>
<dbReference type="GO" id="GO:0005524">
    <property type="term" value="F:ATP binding"/>
    <property type="evidence" value="ECO:0007669"/>
    <property type="project" value="UniProtKB-KW"/>
</dbReference>
<dbReference type="GO" id="GO:0016887">
    <property type="term" value="F:ATP hydrolysis activity"/>
    <property type="evidence" value="ECO:0007669"/>
    <property type="project" value="InterPro"/>
</dbReference>
<dbReference type="CDD" id="cd03300">
    <property type="entry name" value="ABC_PotA_N"/>
    <property type="match status" value="1"/>
</dbReference>
<dbReference type="FunFam" id="3.40.50.300:FF:000133">
    <property type="entry name" value="Spermidine/putrescine import ATP-binding protein PotA"/>
    <property type="match status" value="1"/>
</dbReference>
<dbReference type="Gene3D" id="2.40.50.100">
    <property type="match status" value="1"/>
</dbReference>
<dbReference type="Gene3D" id="3.40.50.300">
    <property type="entry name" value="P-loop containing nucleotide triphosphate hydrolases"/>
    <property type="match status" value="1"/>
</dbReference>
<dbReference type="InterPro" id="IPR003593">
    <property type="entry name" value="AAA+_ATPase"/>
</dbReference>
<dbReference type="InterPro" id="IPR050093">
    <property type="entry name" value="ABC_SmlMolc_Importer"/>
</dbReference>
<dbReference type="InterPro" id="IPR003439">
    <property type="entry name" value="ABC_transporter-like_ATP-bd"/>
</dbReference>
<dbReference type="InterPro" id="IPR017871">
    <property type="entry name" value="ABC_transporter-like_CS"/>
</dbReference>
<dbReference type="InterPro" id="IPR008995">
    <property type="entry name" value="Mo/tungstate-bd_C_term_dom"/>
</dbReference>
<dbReference type="InterPro" id="IPR027417">
    <property type="entry name" value="P-loop_NTPase"/>
</dbReference>
<dbReference type="InterPro" id="IPR005893">
    <property type="entry name" value="PotA-like"/>
</dbReference>
<dbReference type="InterPro" id="IPR017879">
    <property type="entry name" value="PotA_ATP-bd"/>
</dbReference>
<dbReference type="InterPro" id="IPR013611">
    <property type="entry name" value="Transp-assoc_OB_typ2"/>
</dbReference>
<dbReference type="NCBIfam" id="TIGR01187">
    <property type="entry name" value="potA"/>
    <property type="match status" value="1"/>
</dbReference>
<dbReference type="NCBIfam" id="NF006987">
    <property type="entry name" value="PRK09452.1"/>
    <property type="match status" value="1"/>
</dbReference>
<dbReference type="PANTHER" id="PTHR42781">
    <property type="entry name" value="SPERMIDINE/PUTRESCINE IMPORT ATP-BINDING PROTEIN POTA"/>
    <property type="match status" value="1"/>
</dbReference>
<dbReference type="PANTHER" id="PTHR42781:SF4">
    <property type="entry name" value="SPERMIDINE_PUTRESCINE IMPORT ATP-BINDING PROTEIN POTA"/>
    <property type="match status" value="1"/>
</dbReference>
<dbReference type="Pfam" id="PF00005">
    <property type="entry name" value="ABC_tran"/>
    <property type="match status" value="1"/>
</dbReference>
<dbReference type="Pfam" id="PF08402">
    <property type="entry name" value="TOBE_2"/>
    <property type="match status" value="1"/>
</dbReference>
<dbReference type="SMART" id="SM00382">
    <property type="entry name" value="AAA"/>
    <property type="match status" value="1"/>
</dbReference>
<dbReference type="SUPFAM" id="SSF50331">
    <property type="entry name" value="MOP-like"/>
    <property type="match status" value="1"/>
</dbReference>
<dbReference type="SUPFAM" id="SSF52540">
    <property type="entry name" value="P-loop containing nucleoside triphosphate hydrolases"/>
    <property type="match status" value="1"/>
</dbReference>
<dbReference type="PROSITE" id="PS00211">
    <property type="entry name" value="ABC_TRANSPORTER_1"/>
    <property type="match status" value="1"/>
</dbReference>
<dbReference type="PROSITE" id="PS50893">
    <property type="entry name" value="ABC_TRANSPORTER_2"/>
    <property type="match status" value="1"/>
</dbReference>
<dbReference type="PROSITE" id="PS51305">
    <property type="entry name" value="POTA"/>
    <property type="match status" value="1"/>
</dbReference>
<protein>
    <recommendedName>
        <fullName evidence="1">Spermidine/putrescine import ATP-binding protein PotA</fullName>
        <ecNumber evidence="1">7.6.2.11</ecNumber>
    </recommendedName>
</protein>
<keyword id="KW-0067">ATP-binding</keyword>
<keyword id="KW-0997">Cell inner membrane</keyword>
<keyword id="KW-1003">Cell membrane</keyword>
<keyword id="KW-0472">Membrane</keyword>
<keyword id="KW-0547">Nucleotide-binding</keyword>
<keyword id="KW-1185">Reference proteome</keyword>
<keyword id="KW-1278">Translocase</keyword>
<keyword id="KW-0813">Transport</keyword>
<organism>
    <name type="scientific">Aliivibrio fischeri (strain ATCC 700601 / ES114)</name>
    <name type="common">Vibrio fischeri</name>
    <dbReference type="NCBI Taxonomy" id="312309"/>
    <lineage>
        <taxon>Bacteria</taxon>
        <taxon>Pseudomonadati</taxon>
        <taxon>Pseudomonadota</taxon>
        <taxon>Gammaproteobacteria</taxon>
        <taxon>Vibrionales</taxon>
        <taxon>Vibrionaceae</taxon>
        <taxon>Aliivibrio</taxon>
    </lineage>
</organism>
<name>POTA_ALIF1</name>